<keyword id="KW-1185">Reference proteome</keyword>
<keyword id="KW-0346">Stress response</keyword>
<protein>
    <recommendedName>
        <fullName>Small heat shock protein hspL</fullName>
    </recommendedName>
</protein>
<reference key="1">
    <citation type="journal article" date="2005" name="Nature">
        <title>The genome of the social amoeba Dictyostelium discoideum.</title>
        <authorList>
            <person name="Eichinger L."/>
            <person name="Pachebat J.A."/>
            <person name="Gloeckner G."/>
            <person name="Rajandream M.A."/>
            <person name="Sucgang R."/>
            <person name="Berriman M."/>
            <person name="Song J."/>
            <person name="Olsen R."/>
            <person name="Szafranski K."/>
            <person name="Xu Q."/>
            <person name="Tunggal B."/>
            <person name="Kummerfeld S."/>
            <person name="Madera M."/>
            <person name="Konfortov B.A."/>
            <person name="Rivero F."/>
            <person name="Bankier A.T."/>
            <person name="Lehmann R."/>
            <person name="Hamlin N."/>
            <person name="Davies R."/>
            <person name="Gaudet P."/>
            <person name="Fey P."/>
            <person name="Pilcher K."/>
            <person name="Chen G."/>
            <person name="Saunders D."/>
            <person name="Sodergren E.J."/>
            <person name="Davis P."/>
            <person name="Kerhornou A."/>
            <person name="Nie X."/>
            <person name="Hall N."/>
            <person name="Anjard C."/>
            <person name="Hemphill L."/>
            <person name="Bason N."/>
            <person name="Farbrother P."/>
            <person name="Desany B."/>
            <person name="Just E."/>
            <person name="Morio T."/>
            <person name="Rost R."/>
            <person name="Churcher C.M."/>
            <person name="Cooper J."/>
            <person name="Haydock S."/>
            <person name="van Driessche N."/>
            <person name="Cronin A."/>
            <person name="Goodhead I."/>
            <person name="Muzny D.M."/>
            <person name="Mourier T."/>
            <person name="Pain A."/>
            <person name="Lu M."/>
            <person name="Harper D."/>
            <person name="Lindsay R."/>
            <person name="Hauser H."/>
            <person name="James K.D."/>
            <person name="Quiles M."/>
            <person name="Madan Babu M."/>
            <person name="Saito T."/>
            <person name="Buchrieser C."/>
            <person name="Wardroper A."/>
            <person name="Felder M."/>
            <person name="Thangavelu M."/>
            <person name="Johnson D."/>
            <person name="Knights A."/>
            <person name="Loulseged H."/>
            <person name="Mungall K.L."/>
            <person name="Oliver K."/>
            <person name="Price C."/>
            <person name="Quail M.A."/>
            <person name="Urushihara H."/>
            <person name="Hernandez J."/>
            <person name="Rabbinowitsch E."/>
            <person name="Steffen D."/>
            <person name="Sanders M."/>
            <person name="Ma J."/>
            <person name="Kohara Y."/>
            <person name="Sharp S."/>
            <person name="Simmonds M.N."/>
            <person name="Spiegler S."/>
            <person name="Tivey A."/>
            <person name="Sugano S."/>
            <person name="White B."/>
            <person name="Walker D."/>
            <person name="Woodward J.R."/>
            <person name="Winckler T."/>
            <person name="Tanaka Y."/>
            <person name="Shaulsky G."/>
            <person name="Schleicher M."/>
            <person name="Weinstock G.M."/>
            <person name="Rosenthal A."/>
            <person name="Cox E.C."/>
            <person name="Chisholm R.L."/>
            <person name="Gibbs R.A."/>
            <person name="Loomis W.F."/>
            <person name="Platzer M."/>
            <person name="Kay R.R."/>
            <person name="Williams J.G."/>
            <person name="Dear P.H."/>
            <person name="Noegel A.A."/>
            <person name="Barrell B.G."/>
            <person name="Kuspa A."/>
        </authorList>
    </citation>
    <scope>NUCLEOTIDE SEQUENCE [LARGE SCALE GENOMIC DNA]</scope>
    <source>
        <strain>AX4</strain>
    </source>
</reference>
<comment type="similarity">
    <text evidence="1">Belongs to the small heat shock protein (HSP20) family.</text>
</comment>
<proteinExistence type="inferred from homology"/>
<accession>Q55GH8</accession>
<evidence type="ECO:0000255" key="1">
    <source>
        <dbReference type="PROSITE-ProRule" id="PRU00285"/>
    </source>
</evidence>
<name>HSPL_DICDI</name>
<dbReference type="EMBL" id="AAFI02000003">
    <property type="protein sequence ID" value="EAL73287.1"/>
    <property type="molecule type" value="Genomic_DNA"/>
</dbReference>
<dbReference type="RefSeq" id="XP_647206.1">
    <property type="nucleotide sequence ID" value="XM_642114.1"/>
</dbReference>
<dbReference type="SMR" id="Q55GH8"/>
<dbReference type="STRING" id="44689.Q55GH8"/>
<dbReference type="PaxDb" id="44689-DDB0232130"/>
<dbReference type="EnsemblProtists" id="EAL73287">
    <property type="protein sequence ID" value="EAL73287"/>
    <property type="gene ID" value="DDB_G0267668"/>
</dbReference>
<dbReference type="GeneID" id="8616010"/>
<dbReference type="KEGG" id="ddi:DDB_G0267668"/>
<dbReference type="dictyBase" id="DDB_G0267668">
    <property type="gene designation" value="hspL"/>
</dbReference>
<dbReference type="VEuPathDB" id="AmoebaDB:DDB_G0267668"/>
<dbReference type="eggNOG" id="ENOG502RIKI">
    <property type="taxonomic scope" value="Eukaryota"/>
</dbReference>
<dbReference type="HOGENOM" id="CLU_1921020_0_0_1"/>
<dbReference type="InParanoid" id="Q55GH8"/>
<dbReference type="OMA" id="PLMSERW"/>
<dbReference type="PhylomeDB" id="Q55GH8"/>
<dbReference type="PRO" id="PR:Q55GH8"/>
<dbReference type="Proteomes" id="UP000002195">
    <property type="component" value="Chromosome 1"/>
</dbReference>
<dbReference type="GO" id="GO:0051082">
    <property type="term" value="F:unfolded protein binding"/>
    <property type="evidence" value="ECO:0000318"/>
    <property type="project" value="GO_Central"/>
</dbReference>
<dbReference type="GO" id="GO:0051259">
    <property type="term" value="P:protein complex oligomerization"/>
    <property type="evidence" value="ECO:0000318"/>
    <property type="project" value="GO_Central"/>
</dbReference>
<dbReference type="GO" id="GO:0006457">
    <property type="term" value="P:protein folding"/>
    <property type="evidence" value="ECO:0000318"/>
    <property type="project" value="GO_Central"/>
</dbReference>
<dbReference type="GO" id="GO:0009408">
    <property type="term" value="P:response to heat"/>
    <property type="evidence" value="ECO:0000318"/>
    <property type="project" value="GO_Central"/>
</dbReference>
<dbReference type="GO" id="GO:0042542">
    <property type="term" value="P:response to hydrogen peroxide"/>
    <property type="evidence" value="ECO:0000318"/>
    <property type="project" value="GO_Central"/>
</dbReference>
<dbReference type="GO" id="GO:0009651">
    <property type="term" value="P:response to salt stress"/>
    <property type="evidence" value="ECO:0000318"/>
    <property type="project" value="GO_Central"/>
</dbReference>
<dbReference type="CDD" id="cd06464">
    <property type="entry name" value="ACD_sHsps-like"/>
    <property type="match status" value="1"/>
</dbReference>
<dbReference type="Gene3D" id="2.60.40.790">
    <property type="match status" value="1"/>
</dbReference>
<dbReference type="InterPro" id="IPR002068">
    <property type="entry name" value="A-crystallin/Hsp20_dom"/>
</dbReference>
<dbReference type="InterPro" id="IPR008978">
    <property type="entry name" value="HSP20-like_chaperone"/>
</dbReference>
<dbReference type="Pfam" id="PF00011">
    <property type="entry name" value="HSP20"/>
    <property type="match status" value="1"/>
</dbReference>
<dbReference type="SUPFAM" id="SSF49764">
    <property type="entry name" value="HSP20-like chaperones"/>
    <property type="match status" value="1"/>
</dbReference>
<dbReference type="PROSITE" id="PS01031">
    <property type="entry name" value="SHSP"/>
    <property type="match status" value="1"/>
</dbReference>
<gene>
    <name type="primary">hspL</name>
    <name type="ORF">DDB_G0267668</name>
</gene>
<organism>
    <name type="scientific">Dictyostelium discoideum</name>
    <name type="common">Social amoeba</name>
    <dbReference type="NCBI Taxonomy" id="44689"/>
    <lineage>
        <taxon>Eukaryota</taxon>
        <taxon>Amoebozoa</taxon>
        <taxon>Evosea</taxon>
        <taxon>Eumycetozoa</taxon>
        <taxon>Dictyostelia</taxon>
        <taxon>Dictyosteliales</taxon>
        <taxon>Dictyosteliaceae</taxon>
        <taxon>Dictyostelium</taxon>
    </lineage>
</organism>
<feature type="chain" id="PRO_0000363908" description="Small heat shock protein hspL">
    <location>
        <begin position="1"/>
        <end position="132"/>
    </location>
</feature>
<feature type="domain" description="sHSP" evidence="1">
    <location>
        <begin position="15"/>
        <end position="131"/>
    </location>
</feature>
<sequence length="132" mass="14760">MNPVEDFTKLNLFGTFTNFVSAPVPFDCYHDPTKSETILVADLPGVLPNDMKVNVDKDKLIIQGKRECEKHDYLFSNRWCGSFIHHISFAKEVKASDVNVGLGEGILKITISNTPTNNVIGVKMSNNNKVEF</sequence>